<gene>
    <name type="primary">MX2</name>
</gene>
<evidence type="ECO:0000250" key="1"/>
<evidence type="ECO:0000255" key="2"/>
<evidence type="ECO:0000255" key="3">
    <source>
        <dbReference type="PROSITE-ProRule" id="PRU00720"/>
    </source>
</evidence>
<evidence type="ECO:0000255" key="4">
    <source>
        <dbReference type="PROSITE-ProRule" id="PRU01055"/>
    </source>
</evidence>
<evidence type="ECO:0000256" key="5">
    <source>
        <dbReference type="SAM" id="MobiDB-lite"/>
    </source>
</evidence>
<evidence type="ECO:0000269" key="6">
    <source>
    </source>
</evidence>
<evidence type="ECO:0000269" key="7">
    <source>
    </source>
</evidence>
<organism>
    <name type="scientific">Bubalus bubalis</name>
    <name type="common">Domestic water buffalo</name>
    <dbReference type="NCBI Taxonomy" id="89462"/>
    <lineage>
        <taxon>Eukaryota</taxon>
        <taxon>Metazoa</taxon>
        <taxon>Chordata</taxon>
        <taxon>Craniata</taxon>
        <taxon>Vertebrata</taxon>
        <taxon>Euteleostomi</taxon>
        <taxon>Mammalia</taxon>
        <taxon>Eutheria</taxon>
        <taxon>Laurasiatheria</taxon>
        <taxon>Artiodactyla</taxon>
        <taxon>Ruminantia</taxon>
        <taxon>Pecora</taxon>
        <taxon>Bovidae</taxon>
        <taxon>Bovinae</taxon>
        <taxon>Bubalus</taxon>
    </lineage>
</organism>
<sequence>MSLSFRPLKYKRHTQTSTPHHPKQDIYFHEQPPGPPLGQTMSPPQWQVEESNPGFLPNNFSQLNLDPQQPEANGGQQRSKGPENNLYRKYEEKVRPCIDLIDSLRALGVEQDLALPAIAVIGDQSSGKSSVLEALSGVALPRGSGIITRCPLVLKLTKRECEWTGKITYRNITQQLQNPSEVEWEIRRAQNIIAGNGRGISHELINLEVTSPDVPDLTLIDLPGITRVAVENQPQDIGLQIKALIIQRQETINLVVVPCNVDIATKKYTEALSMAQEVDPDGDRTIGILTKPDLVDKGTEKGVLKVMQNLTYHLKKGYMIVKCRGQQDITNKLSLAEATRKETMFFETHPYFRVLLDEGKATMPLLAERLTTELIWHINKSLPLLENQIKEKHQRATEELQQYGDDIPSDEGDKMFFLIEKIKVFNEDIGKLIEGEEIVMETESRLCNKIREEFTSWILILTTNIEKVKSILNEEVSKYEKKYRGKELLGFVNYKTFETVVKHYLGQLIDPALKMLQKAMEIVWQTFKDTAKKHFAEFCNLHQTVQNKIEDIKTKQMAEAANLIQLQFKMEKLVFCQDQIYGVVLNKVREDIFNSMGKASETPQSKQPFLNDQSSISSIVEIGVHLNAYFMETSKRLANQIPFIIQYFMLQENGDKVQKAMMQLLQDTQHYSWLLQEQSDTATKRKFLKEKIFRLTQAQQALYEFPHFKG</sequence>
<name>MX2_BUBBU</name>
<keyword id="KW-0051">Antiviral defense</keyword>
<keyword id="KW-0963">Cytoplasm</keyword>
<keyword id="KW-0342">GTP-binding</keyword>
<keyword id="KW-0391">Immunity</keyword>
<keyword id="KW-0399">Innate immunity</keyword>
<keyword id="KW-0547">Nucleotide-binding</keyword>
<keyword id="KW-0539">Nucleus</keyword>
<protein>
    <recommendedName>
        <fullName>Interferon-induced GTP-binding protein Mx2</fullName>
    </recommendedName>
    <alternativeName>
        <fullName>Myxovirus resistance protein 2</fullName>
    </alternativeName>
</protein>
<dbReference type="EMBL" id="EF052266">
    <property type="protein sequence ID" value="ABK41143.1"/>
    <property type="molecule type" value="mRNA"/>
</dbReference>
<dbReference type="RefSeq" id="NP_001277778.1">
    <property type="nucleotide sequence ID" value="NM_001290849.1"/>
</dbReference>
<dbReference type="SMR" id="A0MWD1"/>
<dbReference type="GeneID" id="102399001"/>
<dbReference type="CTD" id="4600"/>
<dbReference type="OrthoDB" id="5061070at2759"/>
<dbReference type="GO" id="GO:0005737">
    <property type="term" value="C:cytoplasm"/>
    <property type="evidence" value="ECO:0007669"/>
    <property type="project" value="UniProtKB-SubCell"/>
</dbReference>
<dbReference type="GO" id="GO:0005874">
    <property type="term" value="C:microtubule"/>
    <property type="evidence" value="ECO:0007669"/>
    <property type="project" value="TreeGrafter"/>
</dbReference>
<dbReference type="GO" id="GO:0005634">
    <property type="term" value="C:nucleus"/>
    <property type="evidence" value="ECO:0007669"/>
    <property type="project" value="UniProtKB-SubCell"/>
</dbReference>
<dbReference type="GO" id="GO:0005886">
    <property type="term" value="C:plasma membrane"/>
    <property type="evidence" value="ECO:0007669"/>
    <property type="project" value="TreeGrafter"/>
</dbReference>
<dbReference type="GO" id="GO:0098793">
    <property type="term" value="C:presynapse"/>
    <property type="evidence" value="ECO:0007669"/>
    <property type="project" value="GOC"/>
</dbReference>
<dbReference type="GO" id="GO:0005525">
    <property type="term" value="F:GTP binding"/>
    <property type="evidence" value="ECO:0007669"/>
    <property type="project" value="UniProtKB-KW"/>
</dbReference>
<dbReference type="GO" id="GO:0003924">
    <property type="term" value="F:GTPase activity"/>
    <property type="evidence" value="ECO:0007669"/>
    <property type="project" value="InterPro"/>
</dbReference>
<dbReference type="GO" id="GO:0008017">
    <property type="term" value="F:microtubule binding"/>
    <property type="evidence" value="ECO:0007669"/>
    <property type="project" value="TreeGrafter"/>
</dbReference>
<dbReference type="GO" id="GO:0051607">
    <property type="term" value="P:defense response to virus"/>
    <property type="evidence" value="ECO:0007669"/>
    <property type="project" value="UniProtKB-KW"/>
</dbReference>
<dbReference type="GO" id="GO:0045087">
    <property type="term" value="P:innate immune response"/>
    <property type="evidence" value="ECO:0007669"/>
    <property type="project" value="UniProtKB-KW"/>
</dbReference>
<dbReference type="GO" id="GO:0031623">
    <property type="term" value="P:receptor internalization"/>
    <property type="evidence" value="ECO:0007669"/>
    <property type="project" value="TreeGrafter"/>
</dbReference>
<dbReference type="GO" id="GO:0009615">
    <property type="term" value="P:response to virus"/>
    <property type="evidence" value="ECO:0000314"/>
    <property type="project" value="UniProtKB"/>
</dbReference>
<dbReference type="GO" id="GO:0016185">
    <property type="term" value="P:synaptic vesicle budding from presynaptic endocytic zone membrane"/>
    <property type="evidence" value="ECO:0007669"/>
    <property type="project" value="TreeGrafter"/>
</dbReference>
<dbReference type="CDD" id="cd08771">
    <property type="entry name" value="DLP_1"/>
    <property type="match status" value="1"/>
</dbReference>
<dbReference type="FunFam" id="1.20.120.1240:FF:000007">
    <property type="entry name" value="Interferon-induced GTP-binding protein Mx1"/>
    <property type="match status" value="1"/>
</dbReference>
<dbReference type="FunFam" id="3.40.50.300:FF:000621">
    <property type="entry name" value="Interferon-induced GTP-binding protein Mx1"/>
    <property type="match status" value="1"/>
</dbReference>
<dbReference type="Gene3D" id="1.20.120.1240">
    <property type="entry name" value="Dynamin, middle domain"/>
    <property type="match status" value="1"/>
</dbReference>
<dbReference type="Gene3D" id="3.40.50.300">
    <property type="entry name" value="P-loop containing nucleotide triphosphate hydrolases"/>
    <property type="match status" value="1"/>
</dbReference>
<dbReference type="InterPro" id="IPR022812">
    <property type="entry name" value="Dynamin"/>
</dbReference>
<dbReference type="InterPro" id="IPR001401">
    <property type="entry name" value="Dynamin_GTPase"/>
</dbReference>
<dbReference type="InterPro" id="IPR019762">
    <property type="entry name" value="Dynamin_GTPase_CS"/>
</dbReference>
<dbReference type="InterPro" id="IPR045063">
    <property type="entry name" value="Dynamin_N"/>
</dbReference>
<dbReference type="InterPro" id="IPR000375">
    <property type="entry name" value="Dynamin_stalk"/>
</dbReference>
<dbReference type="InterPro" id="IPR030381">
    <property type="entry name" value="G_DYNAMIN_dom"/>
</dbReference>
<dbReference type="InterPro" id="IPR003130">
    <property type="entry name" value="GED"/>
</dbReference>
<dbReference type="InterPro" id="IPR020850">
    <property type="entry name" value="GED_dom"/>
</dbReference>
<dbReference type="InterPro" id="IPR027417">
    <property type="entry name" value="P-loop_NTPase"/>
</dbReference>
<dbReference type="PANTHER" id="PTHR11566">
    <property type="entry name" value="DYNAMIN"/>
    <property type="match status" value="1"/>
</dbReference>
<dbReference type="PANTHER" id="PTHR11566:SF46">
    <property type="entry name" value="INTERFERON-INDUCED GTP-BINDING PROTEIN MX2"/>
    <property type="match status" value="1"/>
</dbReference>
<dbReference type="Pfam" id="PF01031">
    <property type="entry name" value="Dynamin_M"/>
    <property type="match status" value="1"/>
</dbReference>
<dbReference type="Pfam" id="PF00350">
    <property type="entry name" value="Dynamin_N"/>
    <property type="match status" value="1"/>
</dbReference>
<dbReference type="Pfam" id="PF02212">
    <property type="entry name" value="GED"/>
    <property type="match status" value="1"/>
</dbReference>
<dbReference type="PRINTS" id="PR00195">
    <property type="entry name" value="DYNAMIN"/>
</dbReference>
<dbReference type="SMART" id="SM00053">
    <property type="entry name" value="DYNc"/>
    <property type="match status" value="1"/>
</dbReference>
<dbReference type="SMART" id="SM00302">
    <property type="entry name" value="GED"/>
    <property type="match status" value="1"/>
</dbReference>
<dbReference type="SUPFAM" id="SSF52540">
    <property type="entry name" value="P-loop containing nucleoside triphosphate hydrolases"/>
    <property type="match status" value="1"/>
</dbReference>
<dbReference type="PROSITE" id="PS00410">
    <property type="entry name" value="G_DYNAMIN_1"/>
    <property type="match status" value="1"/>
</dbReference>
<dbReference type="PROSITE" id="PS51718">
    <property type="entry name" value="G_DYNAMIN_2"/>
    <property type="match status" value="1"/>
</dbReference>
<dbReference type="PROSITE" id="PS51388">
    <property type="entry name" value="GED"/>
    <property type="match status" value="1"/>
</dbReference>
<reference key="1">
    <citation type="journal article" date="2007" name="Immunogenetics">
        <title>Bovine and water buffalo Mx2 genes: polymorphism and antiviral activity.</title>
        <authorList>
            <person name="Babiker H.A.E."/>
            <person name="Nakatsu Y."/>
            <person name="Yamada K."/>
            <person name="Yoneda A."/>
            <person name="Takada A."/>
            <person name="Ueda J."/>
            <person name="Hata H."/>
            <person name="Watanabe T."/>
        </authorList>
    </citation>
    <scope>NUCLEOTIDE SEQUENCE [MRNA]</scope>
    <scope>FUNCTION</scope>
</reference>
<reference key="2">
    <citation type="journal article" date="2007" name="Microbes Infect.">
        <title>The Mx GTPase family of interferon-induced antiviral proteins.</title>
        <authorList>
            <person name="Haller O."/>
            <person name="Stertz S."/>
            <person name="Kochs G."/>
        </authorList>
    </citation>
    <scope>REVIEW</scope>
    <scope>INDUCTION</scope>
</reference>
<comment type="function">
    <text evidence="6">Interferon-induced dynamin-like GTPase with antiviral activity against vesicular stomatitis virus (VSV).</text>
</comment>
<comment type="subcellular location">
    <subcellularLocation>
        <location evidence="1">Cytoplasm</location>
    </subcellularLocation>
    <subcellularLocation>
        <location evidence="1">Nucleus</location>
    </subcellularLocation>
</comment>
<comment type="induction">
    <text evidence="7">By type I and type III interferons.</text>
</comment>
<comment type="similarity">
    <text evidence="4">Belongs to the TRAFAC class dynamin-like GTPase superfamily. Dynamin/Fzo/YdjA family.</text>
</comment>
<feature type="chain" id="PRO_0000319958" description="Interferon-induced GTP-binding protein Mx2">
    <location>
        <begin position="1"/>
        <end position="710"/>
    </location>
</feature>
<feature type="domain" description="Dynamin-type G" evidence="4">
    <location>
        <begin position="112"/>
        <end position="383"/>
    </location>
</feature>
<feature type="domain" description="GED" evidence="3">
    <location>
        <begin position="619"/>
        <end position="710"/>
    </location>
</feature>
<feature type="region of interest" description="Disordered" evidence="5">
    <location>
        <begin position="1"/>
        <end position="87"/>
    </location>
</feature>
<feature type="region of interest" description="G1 motif" evidence="4">
    <location>
        <begin position="122"/>
        <end position="129"/>
    </location>
</feature>
<feature type="region of interest" description="G2 motif" evidence="4">
    <location>
        <begin position="147"/>
        <end position="149"/>
    </location>
</feature>
<feature type="region of interest" description="G3 motif" evidence="4">
    <location>
        <begin position="221"/>
        <end position="224"/>
    </location>
</feature>
<feature type="region of interest" description="G4 motif" evidence="4">
    <location>
        <begin position="290"/>
        <end position="293"/>
    </location>
</feature>
<feature type="region of interest" description="G5 motif" evidence="4">
    <location>
        <begin position="322"/>
        <end position="325"/>
    </location>
</feature>
<feature type="compositionally biased region" description="Polar residues" evidence="5">
    <location>
        <begin position="39"/>
        <end position="50"/>
    </location>
</feature>
<feature type="compositionally biased region" description="Polar residues" evidence="5">
    <location>
        <begin position="58"/>
        <end position="79"/>
    </location>
</feature>
<feature type="binding site" evidence="2">
    <location>
        <begin position="122"/>
        <end position="129"/>
    </location>
    <ligand>
        <name>GTP</name>
        <dbReference type="ChEBI" id="CHEBI:37565"/>
    </ligand>
</feature>
<feature type="binding site" evidence="2">
    <location>
        <begin position="221"/>
        <end position="225"/>
    </location>
    <ligand>
        <name>GTP</name>
        <dbReference type="ChEBI" id="CHEBI:37565"/>
    </ligand>
</feature>
<feature type="binding site" evidence="2">
    <location>
        <begin position="290"/>
        <end position="293"/>
    </location>
    <ligand>
        <name>GTP</name>
        <dbReference type="ChEBI" id="CHEBI:37565"/>
    </ligand>
</feature>
<accession>A0MWD1</accession>
<proteinExistence type="evidence at transcript level"/>